<name>MUTS_LISIN</name>
<dbReference type="EMBL" id="AL596168">
    <property type="protein sequence ID" value="CAC96671.1"/>
    <property type="molecule type" value="Genomic_DNA"/>
</dbReference>
<dbReference type="PIR" id="AG1612">
    <property type="entry name" value="AG1612"/>
</dbReference>
<dbReference type="RefSeq" id="WP_010991533.1">
    <property type="nucleotide sequence ID" value="NC_003212.1"/>
</dbReference>
<dbReference type="SMR" id="Q92BV3"/>
<dbReference type="STRING" id="272626.gene:17565771"/>
<dbReference type="GeneID" id="93234821"/>
<dbReference type="KEGG" id="lin:mutS"/>
<dbReference type="eggNOG" id="COG0249">
    <property type="taxonomic scope" value="Bacteria"/>
</dbReference>
<dbReference type="HOGENOM" id="CLU_002472_3_1_9"/>
<dbReference type="OrthoDB" id="9802448at2"/>
<dbReference type="Proteomes" id="UP000002513">
    <property type="component" value="Chromosome"/>
</dbReference>
<dbReference type="GO" id="GO:0005829">
    <property type="term" value="C:cytosol"/>
    <property type="evidence" value="ECO:0007669"/>
    <property type="project" value="TreeGrafter"/>
</dbReference>
<dbReference type="GO" id="GO:0005524">
    <property type="term" value="F:ATP binding"/>
    <property type="evidence" value="ECO:0007669"/>
    <property type="project" value="UniProtKB-UniRule"/>
</dbReference>
<dbReference type="GO" id="GO:0140664">
    <property type="term" value="F:ATP-dependent DNA damage sensor activity"/>
    <property type="evidence" value="ECO:0007669"/>
    <property type="project" value="InterPro"/>
</dbReference>
<dbReference type="GO" id="GO:0003684">
    <property type="term" value="F:damaged DNA binding"/>
    <property type="evidence" value="ECO:0007669"/>
    <property type="project" value="UniProtKB-UniRule"/>
</dbReference>
<dbReference type="GO" id="GO:0030983">
    <property type="term" value="F:mismatched DNA binding"/>
    <property type="evidence" value="ECO:0007669"/>
    <property type="project" value="InterPro"/>
</dbReference>
<dbReference type="GO" id="GO:0006298">
    <property type="term" value="P:mismatch repair"/>
    <property type="evidence" value="ECO:0007669"/>
    <property type="project" value="UniProtKB-UniRule"/>
</dbReference>
<dbReference type="CDD" id="cd03284">
    <property type="entry name" value="ABC_MutS1"/>
    <property type="match status" value="1"/>
</dbReference>
<dbReference type="FunFam" id="1.10.1420.10:FF:000007">
    <property type="entry name" value="DNA mismatch repair protein MutS"/>
    <property type="match status" value="1"/>
</dbReference>
<dbReference type="FunFam" id="3.40.1170.10:FF:000001">
    <property type="entry name" value="DNA mismatch repair protein MutS"/>
    <property type="match status" value="1"/>
</dbReference>
<dbReference type="FunFam" id="3.40.50.300:FF:000896">
    <property type="entry name" value="DNA mismatch repair protein MutS"/>
    <property type="match status" value="1"/>
</dbReference>
<dbReference type="Gene3D" id="1.10.1420.10">
    <property type="match status" value="2"/>
</dbReference>
<dbReference type="Gene3D" id="3.40.1170.10">
    <property type="entry name" value="DNA repair protein MutS, domain I"/>
    <property type="match status" value="1"/>
</dbReference>
<dbReference type="Gene3D" id="3.30.420.110">
    <property type="entry name" value="MutS, connector domain"/>
    <property type="match status" value="1"/>
</dbReference>
<dbReference type="Gene3D" id="3.40.50.300">
    <property type="entry name" value="P-loop containing nucleotide triphosphate hydrolases"/>
    <property type="match status" value="1"/>
</dbReference>
<dbReference type="HAMAP" id="MF_00096">
    <property type="entry name" value="MutS"/>
    <property type="match status" value="1"/>
</dbReference>
<dbReference type="InterPro" id="IPR005748">
    <property type="entry name" value="DNA_mismatch_repair_MutS"/>
</dbReference>
<dbReference type="InterPro" id="IPR007695">
    <property type="entry name" value="DNA_mismatch_repair_MutS-lik_N"/>
</dbReference>
<dbReference type="InterPro" id="IPR017261">
    <property type="entry name" value="DNA_mismatch_repair_MutS/MSH"/>
</dbReference>
<dbReference type="InterPro" id="IPR000432">
    <property type="entry name" value="DNA_mismatch_repair_MutS_C"/>
</dbReference>
<dbReference type="InterPro" id="IPR007861">
    <property type="entry name" value="DNA_mismatch_repair_MutS_clamp"/>
</dbReference>
<dbReference type="InterPro" id="IPR007696">
    <property type="entry name" value="DNA_mismatch_repair_MutS_core"/>
</dbReference>
<dbReference type="InterPro" id="IPR016151">
    <property type="entry name" value="DNA_mismatch_repair_MutS_N"/>
</dbReference>
<dbReference type="InterPro" id="IPR036187">
    <property type="entry name" value="DNA_mismatch_repair_MutS_sf"/>
</dbReference>
<dbReference type="InterPro" id="IPR007860">
    <property type="entry name" value="DNA_mmatch_repair_MutS_con_dom"/>
</dbReference>
<dbReference type="InterPro" id="IPR045076">
    <property type="entry name" value="MutS"/>
</dbReference>
<dbReference type="InterPro" id="IPR036678">
    <property type="entry name" value="MutS_con_dom_sf"/>
</dbReference>
<dbReference type="InterPro" id="IPR027417">
    <property type="entry name" value="P-loop_NTPase"/>
</dbReference>
<dbReference type="NCBIfam" id="TIGR01070">
    <property type="entry name" value="mutS1"/>
    <property type="match status" value="1"/>
</dbReference>
<dbReference type="NCBIfam" id="NF003810">
    <property type="entry name" value="PRK05399.1"/>
    <property type="match status" value="1"/>
</dbReference>
<dbReference type="PANTHER" id="PTHR11361:SF34">
    <property type="entry name" value="DNA MISMATCH REPAIR PROTEIN MSH1, MITOCHONDRIAL"/>
    <property type="match status" value="1"/>
</dbReference>
<dbReference type="PANTHER" id="PTHR11361">
    <property type="entry name" value="DNA MISMATCH REPAIR PROTEIN MUTS FAMILY MEMBER"/>
    <property type="match status" value="1"/>
</dbReference>
<dbReference type="Pfam" id="PF01624">
    <property type="entry name" value="MutS_I"/>
    <property type="match status" value="1"/>
</dbReference>
<dbReference type="Pfam" id="PF05188">
    <property type="entry name" value="MutS_II"/>
    <property type="match status" value="1"/>
</dbReference>
<dbReference type="Pfam" id="PF05192">
    <property type="entry name" value="MutS_III"/>
    <property type="match status" value="1"/>
</dbReference>
<dbReference type="Pfam" id="PF05190">
    <property type="entry name" value="MutS_IV"/>
    <property type="match status" value="1"/>
</dbReference>
<dbReference type="Pfam" id="PF00488">
    <property type="entry name" value="MutS_V"/>
    <property type="match status" value="1"/>
</dbReference>
<dbReference type="PIRSF" id="PIRSF037677">
    <property type="entry name" value="DNA_mis_repair_Msh6"/>
    <property type="match status" value="1"/>
</dbReference>
<dbReference type="SMART" id="SM00534">
    <property type="entry name" value="MUTSac"/>
    <property type="match status" value="1"/>
</dbReference>
<dbReference type="SMART" id="SM00533">
    <property type="entry name" value="MUTSd"/>
    <property type="match status" value="1"/>
</dbReference>
<dbReference type="SUPFAM" id="SSF55271">
    <property type="entry name" value="DNA repair protein MutS, domain I"/>
    <property type="match status" value="1"/>
</dbReference>
<dbReference type="SUPFAM" id="SSF53150">
    <property type="entry name" value="DNA repair protein MutS, domain II"/>
    <property type="match status" value="1"/>
</dbReference>
<dbReference type="SUPFAM" id="SSF48334">
    <property type="entry name" value="DNA repair protein MutS, domain III"/>
    <property type="match status" value="1"/>
</dbReference>
<dbReference type="SUPFAM" id="SSF52540">
    <property type="entry name" value="P-loop containing nucleoside triphosphate hydrolases"/>
    <property type="match status" value="1"/>
</dbReference>
<dbReference type="PROSITE" id="PS00486">
    <property type="entry name" value="DNA_MISMATCH_REPAIR_2"/>
    <property type="match status" value="1"/>
</dbReference>
<accession>Q92BV3</accession>
<gene>
    <name evidence="1" type="primary">mutS</name>
    <name type="ordered locus">lin1440</name>
</gene>
<sequence length="860" mass="98215">MTEYTPMIKQYLEIKDKYQDAFLFFRLGDFYEMFFEDALNASQILEITLTGREGGTKEKIPMCGVPYHSASGYIDTLIEKGYKVAICEQVEDPKTTKGMVKREVVQLISPGTVMDERGLKAKENNYIASLYCYEGKEYGFAYSDLSTGELKSTVIEASEDRLINELTTLSTRELIVSESEKEVLSDVMKEQLGLTFSVHEEDTIPAENEKLVTRHMSLSEKRAIGKLLHYLKETQKRDLGHLQQAIHYETSNYMKMDYYSKRNLELAESIRGKGRQGTLLWLLDNTQTAMGGRMLKQWIDRPLIDRKQIIERQDDVSELMAHFFERLELVENLKNVYDLERLAGRVAYGNVNARDLIQLRNSLYQIPRIRATLLSMNSKSLTALANQLDPCEELTEKLEEAIVDSAPISIREGGIIKDGYNSQLDTYRDASRNGKTWIAELERKERELTGIKTMKVGFNRVFGYYIEVTRANTHLLPEGRYERKQTLANAERYITPELKEKEKLILDAEEKSMELEYQLFTEVREMVKDYIERLQKLAKSVSEIDCLQSFADISEKNHFIRPTLSEDGSLHVKQGRHPVVEKVMGAQSYVANDCDLDQNREILLITGPNMSGKSTYMRQVALTAICAQVGCFVPAEEATLPIFDQIFTRIGAADDLIAGQSTFMVEMLEARNAIVHATKDSLILFDEIGRGTATYDGMALAQAIIEYIHENVHAKTLFSTHYHELTDLEKELRGLQNIHVSAVEENGKVVFLHKIKEGPADKSYGIHVAELAELPKSLIERASRILEQLESNDKKIIITQDKQPEEIHEEVQLSMFPVEPEEKASSKETKLLKEIAAMNIMQMTPMDAMNKLYELQSKIH</sequence>
<organism>
    <name type="scientific">Listeria innocua serovar 6a (strain ATCC BAA-680 / CLIP 11262)</name>
    <dbReference type="NCBI Taxonomy" id="272626"/>
    <lineage>
        <taxon>Bacteria</taxon>
        <taxon>Bacillati</taxon>
        <taxon>Bacillota</taxon>
        <taxon>Bacilli</taxon>
        <taxon>Bacillales</taxon>
        <taxon>Listeriaceae</taxon>
        <taxon>Listeria</taxon>
    </lineage>
</organism>
<reference key="1">
    <citation type="journal article" date="2001" name="Science">
        <title>Comparative genomics of Listeria species.</title>
        <authorList>
            <person name="Glaser P."/>
            <person name="Frangeul L."/>
            <person name="Buchrieser C."/>
            <person name="Rusniok C."/>
            <person name="Amend A."/>
            <person name="Baquero F."/>
            <person name="Berche P."/>
            <person name="Bloecker H."/>
            <person name="Brandt P."/>
            <person name="Chakraborty T."/>
            <person name="Charbit A."/>
            <person name="Chetouani F."/>
            <person name="Couve E."/>
            <person name="de Daruvar A."/>
            <person name="Dehoux P."/>
            <person name="Domann E."/>
            <person name="Dominguez-Bernal G."/>
            <person name="Duchaud E."/>
            <person name="Durant L."/>
            <person name="Dussurget O."/>
            <person name="Entian K.-D."/>
            <person name="Fsihi H."/>
            <person name="Garcia-del Portillo F."/>
            <person name="Garrido P."/>
            <person name="Gautier L."/>
            <person name="Goebel W."/>
            <person name="Gomez-Lopez N."/>
            <person name="Hain T."/>
            <person name="Hauf J."/>
            <person name="Jackson D."/>
            <person name="Jones L.-M."/>
            <person name="Kaerst U."/>
            <person name="Kreft J."/>
            <person name="Kuhn M."/>
            <person name="Kunst F."/>
            <person name="Kurapkat G."/>
            <person name="Madueno E."/>
            <person name="Maitournam A."/>
            <person name="Mata Vicente J."/>
            <person name="Ng E."/>
            <person name="Nedjari H."/>
            <person name="Nordsiek G."/>
            <person name="Novella S."/>
            <person name="de Pablos B."/>
            <person name="Perez-Diaz J.-C."/>
            <person name="Purcell R."/>
            <person name="Remmel B."/>
            <person name="Rose M."/>
            <person name="Schlueter T."/>
            <person name="Simoes N."/>
            <person name="Tierrez A."/>
            <person name="Vazquez-Boland J.-A."/>
            <person name="Voss H."/>
            <person name="Wehland J."/>
            <person name="Cossart P."/>
        </authorList>
    </citation>
    <scope>NUCLEOTIDE SEQUENCE [LARGE SCALE GENOMIC DNA]</scope>
    <source>
        <strain>ATCC BAA-680 / CLIP 11262</strain>
    </source>
</reference>
<protein>
    <recommendedName>
        <fullName evidence="1">DNA mismatch repair protein MutS</fullName>
    </recommendedName>
</protein>
<evidence type="ECO:0000255" key="1">
    <source>
        <dbReference type="HAMAP-Rule" id="MF_00096"/>
    </source>
</evidence>
<keyword id="KW-0067">ATP-binding</keyword>
<keyword id="KW-0227">DNA damage</keyword>
<keyword id="KW-0234">DNA repair</keyword>
<keyword id="KW-0238">DNA-binding</keyword>
<keyword id="KW-0547">Nucleotide-binding</keyword>
<proteinExistence type="inferred from homology"/>
<comment type="function">
    <text evidence="1">This protein is involved in the repair of mismatches in DNA. It is possible that it carries out the mismatch recognition step. This protein has a weak ATPase activity.</text>
</comment>
<comment type="similarity">
    <text evidence="1">Belongs to the DNA mismatch repair MutS family.</text>
</comment>
<feature type="chain" id="PRO_0000115108" description="DNA mismatch repair protein MutS">
    <location>
        <begin position="1"/>
        <end position="860"/>
    </location>
</feature>
<feature type="binding site" evidence="1">
    <location>
        <begin position="607"/>
        <end position="614"/>
    </location>
    <ligand>
        <name>ATP</name>
        <dbReference type="ChEBI" id="CHEBI:30616"/>
    </ligand>
</feature>